<name>RNY_BACHK</name>
<feature type="chain" id="PRO_0000344822" description="Ribonuclease Y">
    <location>
        <begin position="1"/>
        <end position="520"/>
    </location>
</feature>
<feature type="transmembrane region" description="Helical" evidence="1">
    <location>
        <begin position="4"/>
        <end position="24"/>
    </location>
</feature>
<feature type="domain" description="KH" evidence="1">
    <location>
        <begin position="210"/>
        <end position="273"/>
    </location>
</feature>
<feature type="domain" description="HD" evidence="2">
    <location>
        <begin position="336"/>
        <end position="429"/>
    </location>
</feature>
<evidence type="ECO:0000255" key="1">
    <source>
        <dbReference type="HAMAP-Rule" id="MF_00335"/>
    </source>
</evidence>
<evidence type="ECO:0000255" key="2">
    <source>
        <dbReference type="PROSITE-ProRule" id="PRU01175"/>
    </source>
</evidence>
<accession>Q6HF37</accession>
<protein>
    <recommendedName>
        <fullName evidence="1">Ribonuclease Y</fullName>
        <shortName evidence="1">RNase Y</shortName>
        <ecNumber evidence="1">3.1.-.-</ecNumber>
    </recommendedName>
</protein>
<organism>
    <name type="scientific">Bacillus thuringiensis subsp. konkukian (strain 97-27)</name>
    <dbReference type="NCBI Taxonomy" id="281309"/>
    <lineage>
        <taxon>Bacteria</taxon>
        <taxon>Bacillati</taxon>
        <taxon>Bacillota</taxon>
        <taxon>Bacilli</taxon>
        <taxon>Bacillales</taxon>
        <taxon>Bacillaceae</taxon>
        <taxon>Bacillus</taxon>
        <taxon>Bacillus cereus group</taxon>
    </lineage>
</organism>
<comment type="function">
    <text evidence="1">Endoribonuclease that initiates mRNA decay.</text>
</comment>
<comment type="subcellular location">
    <subcellularLocation>
        <location evidence="1">Cell membrane</location>
        <topology evidence="1">Single-pass membrane protein</topology>
    </subcellularLocation>
</comment>
<comment type="similarity">
    <text evidence="1">Belongs to the RNase Y family.</text>
</comment>
<proteinExistence type="inferred from homology"/>
<keyword id="KW-1003">Cell membrane</keyword>
<keyword id="KW-0255">Endonuclease</keyword>
<keyword id="KW-0378">Hydrolase</keyword>
<keyword id="KW-0472">Membrane</keyword>
<keyword id="KW-0540">Nuclease</keyword>
<keyword id="KW-0694">RNA-binding</keyword>
<keyword id="KW-0812">Transmembrane</keyword>
<keyword id="KW-1133">Transmembrane helix</keyword>
<gene>
    <name evidence="1" type="primary">rny</name>
    <name type="ordered locus">BT9727_3519</name>
</gene>
<dbReference type="EC" id="3.1.-.-" evidence="1"/>
<dbReference type="EMBL" id="AE017355">
    <property type="protein sequence ID" value="AAT61131.1"/>
    <property type="molecule type" value="Genomic_DNA"/>
</dbReference>
<dbReference type="RefSeq" id="WP_000099773.1">
    <property type="nucleotide sequence ID" value="NC_005957.1"/>
</dbReference>
<dbReference type="RefSeq" id="YP_037839.1">
    <property type="nucleotide sequence ID" value="NC_005957.1"/>
</dbReference>
<dbReference type="SMR" id="Q6HF37"/>
<dbReference type="GeneID" id="45023607"/>
<dbReference type="KEGG" id="btk:BT9727_3519"/>
<dbReference type="PATRIC" id="fig|281309.8.peg.3756"/>
<dbReference type="HOGENOM" id="CLU_028328_1_0_9"/>
<dbReference type="Proteomes" id="UP000001301">
    <property type="component" value="Chromosome"/>
</dbReference>
<dbReference type="GO" id="GO:0005886">
    <property type="term" value="C:plasma membrane"/>
    <property type="evidence" value="ECO:0007669"/>
    <property type="project" value="UniProtKB-SubCell"/>
</dbReference>
<dbReference type="GO" id="GO:0003723">
    <property type="term" value="F:RNA binding"/>
    <property type="evidence" value="ECO:0007669"/>
    <property type="project" value="UniProtKB-UniRule"/>
</dbReference>
<dbReference type="GO" id="GO:0004521">
    <property type="term" value="F:RNA endonuclease activity"/>
    <property type="evidence" value="ECO:0007669"/>
    <property type="project" value="UniProtKB-UniRule"/>
</dbReference>
<dbReference type="GO" id="GO:0006402">
    <property type="term" value="P:mRNA catabolic process"/>
    <property type="evidence" value="ECO:0007669"/>
    <property type="project" value="UniProtKB-UniRule"/>
</dbReference>
<dbReference type="CDD" id="cd00077">
    <property type="entry name" value="HDc"/>
    <property type="match status" value="1"/>
</dbReference>
<dbReference type="CDD" id="cd22431">
    <property type="entry name" value="KH-I_RNaseY"/>
    <property type="match status" value="1"/>
</dbReference>
<dbReference type="FunFam" id="1.10.3210.10:FF:000003">
    <property type="entry name" value="Ribonuclease Y"/>
    <property type="match status" value="1"/>
</dbReference>
<dbReference type="FunFam" id="3.30.1370.10:FF:000006">
    <property type="entry name" value="Ribonuclease Y"/>
    <property type="match status" value="1"/>
</dbReference>
<dbReference type="Gene3D" id="1.10.3210.10">
    <property type="entry name" value="Hypothetical protein af1432"/>
    <property type="match status" value="1"/>
</dbReference>
<dbReference type="Gene3D" id="3.30.1370.10">
    <property type="entry name" value="K Homology domain, type 1"/>
    <property type="match status" value="1"/>
</dbReference>
<dbReference type="HAMAP" id="MF_00335">
    <property type="entry name" value="RNase_Y"/>
    <property type="match status" value="1"/>
</dbReference>
<dbReference type="InterPro" id="IPR003607">
    <property type="entry name" value="HD/PDEase_dom"/>
</dbReference>
<dbReference type="InterPro" id="IPR006674">
    <property type="entry name" value="HD_domain"/>
</dbReference>
<dbReference type="InterPro" id="IPR006675">
    <property type="entry name" value="HDIG_dom"/>
</dbReference>
<dbReference type="InterPro" id="IPR004087">
    <property type="entry name" value="KH_dom"/>
</dbReference>
<dbReference type="InterPro" id="IPR004088">
    <property type="entry name" value="KH_dom_type_1"/>
</dbReference>
<dbReference type="InterPro" id="IPR036612">
    <property type="entry name" value="KH_dom_type_1_sf"/>
</dbReference>
<dbReference type="InterPro" id="IPR017705">
    <property type="entry name" value="Ribonuclease_Y"/>
</dbReference>
<dbReference type="InterPro" id="IPR022711">
    <property type="entry name" value="RNase_Y_N"/>
</dbReference>
<dbReference type="NCBIfam" id="TIGR00277">
    <property type="entry name" value="HDIG"/>
    <property type="match status" value="1"/>
</dbReference>
<dbReference type="NCBIfam" id="TIGR03319">
    <property type="entry name" value="RNase_Y"/>
    <property type="match status" value="1"/>
</dbReference>
<dbReference type="PANTHER" id="PTHR12826">
    <property type="entry name" value="RIBONUCLEASE Y"/>
    <property type="match status" value="1"/>
</dbReference>
<dbReference type="PANTHER" id="PTHR12826:SF15">
    <property type="entry name" value="RIBONUCLEASE Y"/>
    <property type="match status" value="1"/>
</dbReference>
<dbReference type="Pfam" id="PF01966">
    <property type="entry name" value="HD"/>
    <property type="match status" value="1"/>
</dbReference>
<dbReference type="Pfam" id="PF00013">
    <property type="entry name" value="KH_1"/>
    <property type="match status" value="1"/>
</dbReference>
<dbReference type="Pfam" id="PF12072">
    <property type="entry name" value="RNase_Y_N"/>
    <property type="match status" value="1"/>
</dbReference>
<dbReference type="SMART" id="SM00471">
    <property type="entry name" value="HDc"/>
    <property type="match status" value="1"/>
</dbReference>
<dbReference type="SMART" id="SM00322">
    <property type="entry name" value="KH"/>
    <property type="match status" value="1"/>
</dbReference>
<dbReference type="SUPFAM" id="SSF54791">
    <property type="entry name" value="Eukaryotic type KH-domain (KH-domain type I)"/>
    <property type="match status" value="1"/>
</dbReference>
<dbReference type="SUPFAM" id="SSF109604">
    <property type="entry name" value="HD-domain/PDEase-like"/>
    <property type="match status" value="1"/>
</dbReference>
<dbReference type="PROSITE" id="PS51831">
    <property type="entry name" value="HD"/>
    <property type="match status" value="1"/>
</dbReference>
<dbReference type="PROSITE" id="PS50084">
    <property type="entry name" value="KH_TYPE_1"/>
    <property type="match status" value="1"/>
</dbReference>
<reference key="1">
    <citation type="journal article" date="2006" name="J. Bacteriol.">
        <title>Pathogenomic sequence analysis of Bacillus cereus and Bacillus thuringiensis isolates closely related to Bacillus anthracis.</title>
        <authorList>
            <person name="Han C.S."/>
            <person name="Xie G."/>
            <person name="Challacombe J.F."/>
            <person name="Altherr M.R."/>
            <person name="Bhotika S.S."/>
            <person name="Bruce D."/>
            <person name="Campbell C.S."/>
            <person name="Campbell M.L."/>
            <person name="Chen J."/>
            <person name="Chertkov O."/>
            <person name="Cleland C."/>
            <person name="Dimitrijevic M."/>
            <person name="Doggett N.A."/>
            <person name="Fawcett J.J."/>
            <person name="Glavina T."/>
            <person name="Goodwin L.A."/>
            <person name="Hill K.K."/>
            <person name="Hitchcock P."/>
            <person name="Jackson P.J."/>
            <person name="Keim P."/>
            <person name="Kewalramani A.R."/>
            <person name="Longmire J."/>
            <person name="Lucas S."/>
            <person name="Malfatti S."/>
            <person name="McMurry K."/>
            <person name="Meincke L.J."/>
            <person name="Misra M."/>
            <person name="Moseman B.L."/>
            <person name="Mundt M."/>
            <person name="Munk A.C."/>
            <person name="Okinaka R.T."/>
            <person name="Parson-Quintana B."/>
            <person name="Reilly L.P."/>
            <person name="Richardson P."/>
            <person name="Robinson D.L."/>
            <person name="Rubin E."/>
            <person name="Saunders E."/>
            <person name="Tapia R."/>
            <person name="Tesmer J.G."/>
            <person name="Thayer N."/>
            <person name="Thompson L.S."/>
            <person name="Tice H."/>
            <person name="Ticknor L.O."/>
            <person name="Wills P.L."/>
            <person name="Brettin T.S."/>
            <person name="Gilna P."/>
        </authorList>
    </citation>
    <scope>NUCLEOTIDE SEQUENCE [LARGE SCALE GENOMIC DNA]</scope>
    <source>
        <strain>97-27</strain>
    </source>
</reference>
<sequence length="520" mass="58603">MSSTVWILISILLATVGAVVGFFVRKSIAEAKINGAANEAKRILDEANREAEALKKEALLEAKDEIHTLRTEAELEIRDRRSELQKQENRLMQKEENLDRKDETLDKRELQLEKKEDSLVARQQQIEELESKVGELVQKQQTELERISNLTREQAKAIILGKVESEVSHEIAVMVKESEVRAKEEADKKAKEILSLAMQRCAADHVAETTVSVVNLPNDEMKGRIIGREGRNIRTLETLTGIDLIIDDTPEAVILSGFDPIRRETARIALDKLVQDGRIHPARIEEMVEKSRREVDEYIREVGEQTTFEVGVHGLHPDLIKILGRLKYRTSYGQNVLKHSMEVAYLTGLMAAELGEDEKLARRAGLLHDIGKAIDHEVEGSHVEIGVELATKYKEHPVVINSIASHHGDTEPTSIIAVLVAAADALSAARPGARSETLENYIRRLEKLEEISESYEGVEKSFAIQAGREVRILVKPDTIDDLEAHRLARDIRKRIENELDYPGHIKVTVIRETRAVEYAK</sequence>